<accession>Q6AEU4</accession>
<feature type="chain" id="PRO_0000188713" description="1,4-alpha-glucan branching enzyme GlgB">
    <location>
        <begin position="1"/>
        <end position="733"/>
    </location>
</feature>
<feature type="active site" description="Nucleophile" evidence="1">
    <location>
        <position position="413"/>
    </location>
</feature>
<feature type="active site" description="Proton donor" evidence="1">
    <location>
        <position position="466"/>
    </location>
</feature>
<protein>
    <recommendedName>
        <fullName evidence="1">1,4-alpha-glucan branching enzyme GlgB</fullName>
        <ecNumber evidence="1">2.4.1.18</ecNumber>
    </recommendedName>
    <alternativeName>
        <fullName evidence="1">1,4-alpha-D-glucan:1,4-alpha-D-glucan 6-glucosyl-transferase</fullName>
    </alternativeName>
    <alternativeName>
        <fullName evidence="1">Alpha-(1-&gt;4)-glucan branching enzyme</fullName>
    </alternativeName>
    <alternativeName>
        <fullName evidence="1">Glycogen branching enzyme</fullName>
        <shortName evidence="1">BE</shortName>
    </alternativeName>
</protein>
<organism>
    <name type="scientific">Leifsonia xyli subsp. xyli (strain CTCB07)</name>
    <dbReference type="NCBI Taxonomy" id="281090"/>
    <lineage>
        <taxon>Bacteria</taxon>
        <taxon>Bacillati</taxon>
        <taxon>Actinomycetota</taxon>
        <taxon>Actinomycetes</taxon>
        <taxon>Micrococcales</taxon>
        <taxon>Microbacteriaceae</taxon>
        <taxon>Leifsonia</taxon>
    </lineage>
</organism>
<name>GLGB_LEIXX</name>
<proteinExistence type="inferred from homology"/>
<comment type="function">
    <text evidence="1">Catalyzes the formation of the alpha-1,6-glucosidic linkages in glycogen by scission of a 1,4-alpha-linked oligosaccharide from growing alpha-1,4-glucan chains and the subsequent attachment of the oligosaccharide to the alpha-1,6 position.</text>
</comment>
<comment type="catalytic activity">
    <reaction evidence="1">
        <text>Transfers a segment of a (1-&gt;4)-alpha-D-glucan chain to a primary hydroxy group in a similar glucan chain.</text>
        <dbReference type="EC" id="2.4.1.18"/>
    </reaction>
</comment>
<comment type="pathway">
    <text evidence="1">Glycan biosynthesis; glycogen biosynthesis.</text>
</comment>
<comment type="subunit">
    <text evidence="1">Monomer.</text>
</comment>
<comment type="similarity">
    <text evidence="1">Belongs to the glycosyl hydrolase 13 family. GlgB subfamily.</text>
</comment>
<keyword id="KW-0119">Carbohydrate metabolism</keyword>
<keyword id="KW-0320">Glycogen biosynthesis</keyword>
<keyword id="KW-0321">Glycogen metabolism</keyword>
<keyword id="KW-0328">Glycosyltransferase</keyword>
<keyword id="KW-1185">Reference proteome</keyword>
<keyword id="KW-0808">Transferase</keyword>
<dbReference type="EC" id="2.4.1.18" evidence="1"/>
<dbReference type="EMBL" id="AE016822">
    <property type="protein sequence ID" value="AAT89101.1"/>
    <property type="molecule type" value="Genomic_DNA"/>
</dbReference>
<dbReference type="RefSeq" id="WP_011186096.1">
    <property type="nucleotide sequence ID" value="NC_006087.1"/>
</dbReference>
<dbReference type="SMR" id="Q6AEU4"/>
<dbReference type="STRING" id="281090.Lxx12570"/>
<dbReference type="CAZy" id="CBM48">
    <property type="family name" value="Carbohydrate-Binding Module Family 48"/>
</dbReference>
<dbReference type="CAZy" id="GH13">
    <property type="family name" value="Glycoside Hydrolase Family 13"/>
</dbReference>
<dbReference type="KEGG" id="lxx:Lxx12570"/>
<dbReference type="eggNOG" id="COG0296">
    <property type="taxonomic scope" value="Bacteria"/>
</dbReference>
<dbReference type="HOGENOM" id="CLU_004245_3_2_11"/>
<dbReference type="UniPathway" id="UPA00164"/>
<dbReference type="Proteomes" id="UP000001306">
    <property type="component" value="Chromosome"/>
</dbReference>
<dbReference type="GO" id="GO:0005829">
    <property type="term" value="C:cytosol"/>
    <property type="evidence" value="ECO:0007669"/>
    <property type="project" value="TreeGrafter"/>
</dbReference>
<dbReference type="GO" id="GO:0003844">
    <property type="term" value="F:1,4-alpha-glucan branching enzyme activity"/>
    <property type="evidence" value="ECO:0007669"/>
    <property type="project" value="UniProtKB-UniRule"/>
</dbReference>
<dbReference type="GO" id="GO:0043169">
    <property type="term" value="F:cation binding"/>
    <property type="evidence" value="ECO:0007669"/>
    <property type="project" value="InterPro"/>
</dbReference>
<dbReference type="GO" id="GO:0004553">
    <property type="term" value="F:hydrolase activity, hydrolyzing O-glycosyl compounds"/>
    <property type="evidence" value="ECO:0007669"/>
    <property type="project" value="InterPro"/>
</dbReference>
<dbReference type="GO" id="GO:0005978">
    <property type="term" value="P:glycogen biosynthetic process"/>
    <property type="evidence" value="ECO:0007669"/>
    <property type="project" value="UniProtKB-UniRule"/>
</dbReference>
<dbReference type="CDD" id="cd11322">
    <property type="entry name" value="AmyAc_Glg_BE"/>
    <property type="match status" value="1"/>
</dbReference>
<dbReference type="CDD" id="cd02855">
    <property type="entry name" value="E_set_GBE_prok_N"/>
    <property type="match status" value="1"/>
</dbReference>
<dbReference type="FunFam" id="2.60.40.10:FF:000169">
    <property type="entry name" value="1,4-alpha-glucan branching enzyme GlgB"/>
    <property type="match status" value="1"/>
</dbReference>
<dbReference type="FunFam" id="2.60.40.1180:FF:000002">
    <property type="entry name" value="1,4-alpha-glucan branching enzyme GlgB"/>
    <property type="match status" value="1"/>
</dbReference>
<dbReference type="FunFam" id="3.20.20.80:FF:000003">
    <property type="entry name" value="1,4-alpha-glucan branching enzyme GlgB"/>
    <property type="match status" value="1"/>
</dbReference>
<dbReference type="Gene3D" id="3.20.20.80">
    <property type="entry name" value="Glycosidases"/>
    <property type="match status" value="1"/>
</dbReference>
<dbReference type="Gene3D" id="2.60.40.1180">
    <property type="entry name" value="Golgi alpha-mannosidase II"/>
    <property type="match status" value="1"/>
</dbReference>
<dbReference type="Gene3D" id="2.60.40.10">
    <property type="entry name" value="Immunoglobulins"/>
    <property type="match status" value="2"/>
</dbReference>
<dbReference type="HAMAP" id="MF_00685">
    <property type="entry name" value="GlgB"/>
    <property type="match status" value="1"/>
</dbReference>
<dbReference type="InterPro" id="IPR006048">
    <property type="entry name" value="A-amylase/branching_C"/>
</dbReference>
<dbReference type="InterPro" id="IPR037439">
    <property type="entry name" value="Branching_enzy"/>
</dbReference>
<dbReference type="InterPro" id="IPR006407">
    <property type="entry name" value="GlgB"/>
</dbReference>
<dbReference type="InterPro" id="IPR054169">
    <property type="entry name" value="GlgB_N"/>
</dbReference>
<dbReference type="InterPro" id="IPR044143">
    <property type="entry name" value="GlgB_N_E_set_prok"/>
</dbReference>
<dbReference type="InterPro" id="IPR006047">
    <property type="entry name" value="Glyco_hydro_13_cat_dom"/>
</dbReference>
<dbReference type="InterPro" id="IPR004193">
    <property type="entry name" value="Glyco_hydro_13_N"/>
</dbReference>
<dbReference type="InterPro" id="IPR013780">
    <property type="entry name" value="Glyco_hydro_b"/>
</dbReference>
<dbReference type="InterPro" id="IPR017853">
    <property type="entry name" value="Glycoside_hydrolase_SF"/>
</dbReference>
<dbReference type="InterPro" id="IPR013783">
    <property type="entry name" value="Ig-like_fold"/>
</dbReference>
<dbReference type="InterPro" id="IPR014756">
    <property type="entry name" value="Ig_E-set"/>
</dbReference>
<dbReference type="NCBIfam" id="TIGR01515">
    <property type="entry name" value="branching_enzym"/>
    <property type="match status" value="1"/>
</dbReference>
<dbReference type="NCBIfam" id="NF003811">
    <property type="entry name" value="PRK05402.1"/>
    <property type="match status" value="1"/>
</dbReference>
<dbReference type="NCBIfam" id="NF008967">
    <property type="entry name" value="PRK12313.1"/>
    <property type="match status" value="1"/>
</dbReference>
<dbReference type="PANTHER" id="PTHR43651">
    <property type="entry name" value="1,4-ALPHA-GLUCAN-BRANCHING ENZYME"/>
    <property type="match status" value="1"/>
</dbReference>
<dbReference type="PANTHER" id="PTHR43651:SF3">
    <property type="entry name" value="1,4-ALPHA-GLUCAN-BRANCHING ENZYME"/>
    <property type="match status" value="1"/>
</dbReference>
<dbReference type="Pfam" id="PF00128">
    <property type="entry name" value="Alpha-amylase"/>
    <property type="match status" value="1"/>
</dbReference>
<dbReference type="Pfam" id="PF02806">
    <property type="entry name" value="Alpha-amylase_C"/>
    <property type="match status" value="1"/>
</dbReference>
<dbReference type="Pfam" id="PF02922">
    <property type="entry name" value="CBM_48"/>
    <property type="match status" value="1"/>
</dbReference>
<dbReference type="Pfam" id="PF22019">
    <property type="entry name" value="GlgB_N"/>
    <property type="match status" value="1"/>
</dbReference>
<dbReference type="PIRSF" id="PIRSF000463">
    <property type="entry name" value="GlgB"/>
    <property type="match status" value="1"/>
</dbReference>
<dbReference type="SMART" id="SM00642">
    <property type="entry name" value="Aamy"/>
    <property type="match status" value="1"/>
</dbReference>
<dbReference type="SUPFAM" id="SSF51445">
    <property type="entry name" value="(Trans)glycosidases"/>
    <property type="match status" value="1"/>
</dbReference>
<dbReference type="SUPFAM" id="SSF81296">
    <property type="entry name" value="E set domains"/>
    <property type="match status" value="2"/>
</dbReference>
<dbReference type="SUPFAM" id="SSF51011">
    <property type="entry name" value="Glycosyl hydrolase domain"/>
    <property type="match status" value="1"/>
</dbReference>
<gene>
    <name evidence="1" type="primary">glgB</name>
    <name type="ordered locus">Lxx12570</name>
</gene>
<evidence type="ECO:0000255" key="1">
    <source>
        <dbReference type="HAMAP-Rule" id="MF_00685"/>
    </source>
</evidence>
<reference key="1">
    <citation type="journal article" date="2004" name="Mol. Plant Microbe Interact.">
        <title>The genome sequence of the Gram-positive sugarcane pathogen Leifsonia xyli subsp. xyli.</title>
        <authorList>
            <person name="Monteiro-Vitorello C.B."/>
            <person name="Camargo L.E.A."/>
            <person name="Van Sluys M.A."/>
            <person name="Kitajima J.P."/>
            <person name="Truffi D."/>
            <person name="do Amaral A.M."/>
            <person name="Harakava R."/>
            <person name="de Oliveira J.C.F."/>
            <person name="Wood D."/>
            <person name="de Oliveira M.C."/>
            <person name="Miyaki C.Y."/>
            <person name="Takita M.A."/>
            <person name="da Silva A.C.R."/>
            <person name="Furlan L.R."/>
            <person name="Carraro D.M."/>
            <person name="Camarotte G."/>
            <person name="Almeida N.F. Jr."/>
            <person name="Carrer H."/>
            <person name="Coutinho L.L."/>
            <person name="El-Dorry H.A."/>
            <person name="Ferro M.I.T."/>
            <person name="Gagliardi P.R."/>
            <person name="Giglioti E."/>
            <person name="Goldman M.H.S."/>
            <person name="Goldman G.H."/>
            <person name="Kimura E.T."/>
            <person name="Ferro E.S."/>
            <person name="Kuramae E.E."/>
            <person name="Lemos E.G.M."/>
            <person name="Lemos M.V.F."/>
            <person name="Mauro S.M.Z."/>
            <person name="Machado M.A."/>
            <person name="Marino C.L."/>
            <person name="Menck C.F."/>
            <person name="Nunes L.R."/>
            <person name="Oliveira R.C."/>
            <person name="Pereira G.G."/>
            <person name="Siqueira W."/>
            <person name="de Souza A.A."/>
            <person name="Tsai S.M."/>
            <person name="Zanca A.S."/>
            <person name="Simpson A.J.G."/>
            <person name="Brumbley S.M."/>
            <person name="Setubal J.C."/>
        </authorList>
    </citation>
    <scope>NUCLEOTIDE SEQUENCE [LARGE SCALE GENOMIC DNA]</scope>
    <source>
        <strain>CTCB07</strain>
    </source>
</reference>
<sequence length="733" mass="81009">MTPLPERAAALPGIDDAVLHAVATGSYHDPHSVLGQHQVAAAGIADPVTVIRTLRPLAEAVFAVLPTGAYLELAHLAHGIWQGVDIAGPGAYEIEARYADGSAWSADDPYRFLPTIGELDLHLIREGRHERLWTALGARLRDLGGVTGTAFTVWAPHARAVRVVGDFNGWDGTLHSLRNMGSSGVWELFVPGVGEGAIYKFDLLAQSGDWVRKIDPMAQLAETPPDTASRIAVSRHEWQDGEWMRRRAASDPHTGPMSIYELHFGSWRPDLGYREAADQLIDYLGALGYTHVEFLPLAEHPFGGSWGYQVTGYYAPTSRFGSPDDLKYLIDRLHRAGIGVLLDWVPGHFPKDDWALARFDGQPLYEHADPRRGEHADWGTYVFDYGNSQVRNFLVANALYWLEEFHIDGLRVDAVASMLYLDYSRDADGWEPNIHGGRENLEAIAFLQEVTATAYKRNPGTIVIAEESTSYPGVTAPTSSGGLGFGLKWNMGWMHDSLQYIREDPLYRSWHHSRITFSFVYAWSESFLLPISHDEVVHGKGSLLGKMPGDHWQQLANMRAYLAFMWAHPGKQLLFMGQEFGQPSEWSEERGLDWWILDQPAHRGLWNLVCELNAVYRGAPALWAHDNDPSGFEWLDGSDAAGNVLAFLRKDGRGEPIAVILNFSGAPHTEYRVGLPFAGGWEELLNTDADVFGGSGVGNFGGVTAVEEPWMGSPASAVLTLPPLGALFLKTGR</sequence>